<sequence length="318" mass="36426">MVSVYLLANFGGPRHASDIEVFLTSLLTDRDVTGKFLPPFIHKRLFSFIAKKRVAKVLPQYNCIGGFSPIYRDTEDLADTLSLYLDAPVITFHRYLPDTHQLTVQRLKAFGDCPVIGVPLFPHFTYSVTGSIVRFIHAHLPLLNISWISHFGNHPQFIFCMIDHILKFLQSHDISIHDCCLLFSAHGLPMRYINKGDPYNKHCEKSFKTISERLPNIETHLCYQSKFGPGRWLTPSTKDVCETLKTDKTYVLIVPFGFTSDHIETLYEIEKEYIPILKAREYRALRVPAIYQSPEWAASLATIIQSTPRAEKESLIKP</sequence>
<proteinExistence type="inferred from homology"/>
<keyword id="KW-0963">Cytoplasm</keyword>
<keyword id="KW-0350">Heme biosynthesis</keyword>
<keyword id="KW-0408">Iron</keyword>
<keyword id="KW-0456">Lyase</keyword>
<keyword id="KW-0479">Metal-binding</keyword>
<keyword id="KW-0627">Porphyrin biosynthesis</keyword>
<reference key="1">
    <citation type="journal article" date="2006" name="DNA Res.">
        <title>Genome sequence of the cat pathogen, Chlamydophila felis.</title>
        <authorList>
            <person name="Azuma Y."/>
            <person name="Hirakawa H."/>
            <person name="Yamashita A."/>
            <person name="Cai Y."/>
            <person name="Rahman M.A."/>
            <person name="Suzuki H."/>
            <person name="Mitaku S."/>
            <person name="Toh H."/>
            <person name="Goto S."/>
            <person name="Murakami T."/>
            <person name="Sugi K."/>
            <person name="Hayashi H."/>
            <person name="Fukushi H."/>
            <person name="Hattori M."/>
            <person name="Kuhara S."/>
            <person name="Shirai M."/>
        </authorList>
    </citation>
    <scope>NUCLEOTIDE SEQUENCE [LARGE SCALE GENOMIC DNA]</scope>
    <source>
        <strain>Fe/C-56</strain>
    </source>
</reference>
<name>HEMH_CHLFF</name>
<evidence type="ECO:0000255" key="1">
    <source>
        <dbReference type="HAMAP-Rule" id="MF_00323"/>
    </source>
</evidence>
<accession>Q252Z7</accession>
<protein>
    <recommendedName>
        <fullName evidence="1">Ferrochelatase</fullName>
        <ecNumber evidence="1">4.98.1.1</ecNumber>
    </recommendedName>
    <alternativeName>
        <fullName evidence="1">Heme synthase</fullName>
    </alternativeName>
    <alternativeName>
        <fullName evidence="1">Protoheme ferro-lyase</fullName>
    </alternativeName>
</protein>
<gene>
    <name evidence="1" type="primary">hemH</name>
    <name type="ordered locus">CF0869</name>
</gene>
<dbReference type="EC" id="4.98.1.1" evidence="1"/>
<dbReference type="EMBL" id="AP006861">
    <property type="protein sequence ID" value="BAE81641.1"/>
    <property type="molecule type" value="Genomic_DNA"/>
</dbReference>
<dbReference type="RefSeq" id="WP_011458416.1">
    <property type="nucleotide sequence ID" value="NC_007899.1"/>
</dbReference>
<dbReference type="SMR" id="Q252Z7"/>
<dbReference type="STRING" id="264202.CF0869"/>
<dbReference type="KEGG" id="cfe:CF0869"/>
<dbReference type="eggNOG" id="COG0276">
    <property type="taxonomic scope" value="Bacteria"/>
</dbReference>
<dbReference type="HOGENOM" id="CLU_018884_4_1_0"/>
<dbReference type="OrthoDB" id="9809741at2"/>
<dbReference type="UniPathway" id="UPA00252">
    <property type="reaction ID" value="UER00325"/>
</dbReference>
<dbReference type="Proteomes" id="UP000001260">
    <property type="component" value="Chromosome"/>
</dbReference>
<dbReference type="GO" id="GO:0005737">
    <property type="term" value="C:cytoplasm"/>
    <property type="evidence" value="ECO:0007669"/>
    <property type="project" value="UniProtKB-SubCell"/>
</dbReference>
<dbReference type="GO" id="GO:0004325">
    <property type="term" value="F:ferrochelatase activity"/>
    <property type="evidence" value="ECO:0007669"/>
    <property type="project" value="UniProtKB-UniRule"/>
</dbReference>
<dbReference type="GO" id="GO:0046872">
    <property type="term" value="F:metal ion binding"/>
    <property type="evidence" value="ECO:0007669"/>
    <property type="project" value="UniProtKB-KW"/>
</dbReference>
<dbReference type="GO" id="GO:0006783">
    <property type="term" value="P:heme biosynthetic process"/>
    <property type="evidence" value="ECO:0007669"/>
    <property type="project" value="UniProtKB-UniRule"/>
</dbReference>
<dbReference type="CDD" id="cd00419">
    <property type="entry name" value="Ferrochelatase_C"/>
    <property type="match status" value="1"/>
</dbReference>
<dbReference type="CDD" id="cd03411">
    <property type="entry name" value="Ferrochelatase_N"/>
    <property type="match status" value="1"/>
</dbReference>
<dbReference type="Gene3D" id="3.40.50.1400">
    <property type="match status" value="2"/>
</dbReference>
<dbReference type="HAMAP" id="MF_00323">
    <property type="entry name" value="Ferrochelatase"/>
    <property type="match status" value="1"/>
</dbReference>
<dbReference type="InterPro" id="IPR001015">
    <property type="entry name" value="Ferrochelatase"/>
</dbReference>
<dbReference type="InterPro" id="IPR019772">
    <property type="entry name" value="Ferrochelatase_AS"/>
</dbReference>
<dbReference type="InterPro" id="IPR033644">
    <property type="entry name" value="Ferrochelatase_C"/>
</dbReference>
<dbReference type="InterPro" id="IPR033659">
    <property type="entry name" value="Ferrochelatase_N"/>
</dbReference>
<dbReference type="NCBIfam" id="TIGR00109">
    <property type="entry name" value="hemH"/>
    <property type="match status" value="1"/>
</dbReference>
<dbReference type="PANTHER" id="PTHR11108">
    <property type="entry name" value="FERROCHELATASE"/>
    <property type="match status" value="1"/>
</dbReference>
<dbReference type="PANTHER" id="PTHR11108:SF1">
    <property type="entry name" value="FERROCHELATASE, MITOCHONDRIAL"/>
    <property type="match status" value="1"/>
</dbReference>
<dbReference type="Pfam" id="PF00762">
    <property type="entry name" value="Ferrochelatase"/>
    <property type="match status" value="1"/>
</dbReference>
<dbReference type="SUPFAM" id="SSF53800">
    <property type="entry name" value="Chelatase"/>
    <property type="match status" value="1"/>
</dbReference>
<dbReference type="PROSITE" id="PS00534">
    <property type="entry name" value="FERROCHELATASE"/>
    <property type="match status" value="1"/>
</dbReference>
<comment type="function">
    <text evidence="1">Catalyzes the ferrous insertion into protoporphyrin IX.</text>
</comment>
<comment type="catalytic activity">
    <reaction evidence="1">
        <text>heme b + 2 H(+) = protoporphyrin IX + Fe(2+)</text>
        <dbReference type="Rhea" id="RHEA:22584"/>
        <dbReference type="ChEBI" id="CHEBI:15378"/>
        <dbReference type="ChEBI" id="CHEBI:29033"/>
        <dbReference type="ChEBI" id="CHEBI:57306"/>
        <dbReference type="ChEBI" id="CHEBI:60344"/>
        <dbReference type="EC" id="4.98.1.1"/>
    </reaction>
</comment>
<comment type="pathway">
    <text evidence="1">Porphyrin-containing compound metabolism; protoheme biosynthesis; protoheme from protoporphyrin-IX: step 1/1.</text>
</comment>
<comment type="subcellular location">
    <subcellularLocation>
        <location evidence="1">Cytoplasm</location>
    </subcellularLocation>
</comment>
<comment type="similarity">
    <text evidence="1">Belongs to the ferrochelatase family.</text>
</comment>
<feature type="chain" id="PRO_1000019291" description="Ferrochelatase">
    <location>
        <begin position="1"/>
        <end position="318"/>
    </location>
</feature>
<feature type="binding site" evidence="1">
    <location>
        <position position="186"/>
    </location>
    <ligand>
        <name>Fe cation</name>
        <dbReference type="ChEBI" id="CHEBI:24875"/>
    </ligand>
</feature>
<feature type="binding site" evidence="1">
    <location>
        <position position="264"/>
    </location>
    <ligand>
        <name>Fe cation</name>
        <dbReference type="ChEBI" id="CHEBI:24875"/>
    </ligand>
</feature>
<organism>
    <name type="scientific">Chlamydia felis (strain Fe/C-56)</name>
    <name type="common">Chlamydophila felis</name>
    <dbReference type="NCBI Taxonomy" id="264202"/>
    <lineage>
        <taxon>Bacteria</taxon>
        <taxon>Pseudomonadati</taxon>
        <taxon>Chlamydiota</taxon>
        <taxon>Chlamydiia</taxon>
        <taxon>Chlamydiales</taxon>
        <taxon>Chlamydiaceae</taxon>
        <taxon>Chlamydia/Chlamydophila group</taxon>
        <taxon>Chlamydia</taxon>
    </lineage>
</organism>